<reference key="1">
    <citation type="journal article" date="2007" name="PLoS ONE">
        <title>Molecular correlates of host specialization in Staphylococcus aureus.</title>
        <authorList>
            <person name="Herron-Olson L."/>
            <person name="Fitzgerald J.R."/>
            <person name="Musser J.M."/>
            <person name="Kapur V."/>
        </authorList>
    </citation>
    <scope>NUCLEOTIDE SEQUENCE [LARGE SCALE GENOMIC DNA]</scope>
    <source>
        <strain>bovine RF122 / ET3-1</strain>
    </source>
</reference>
<protein>
    <recommendedName>
        <fullName evidence="1">Beta-ketoacyl-[acyl-carrier-protein] synthase III</fullName>
        <shortName evidence="1">Beta-ketoacyl-ACP synthase III</shortName>
        <shortName evidence="1">KAS III</shortName>
        <ecNumber evidence="1">2.3.1.180</ecNumber>
    </recommendedName>
    <alternativeName>
        <fullName evidence="1">3-oxoacyl-[acyl-carrier-protein] synthase 3</fullName>
    </alternativeName>
    <alternativeName>
        <fullName evidence="1">3-oxoacyl-[acyl-carrier-protein] synthase III</fullName>
    </alternativeName>
</protein>
<accession>Q2YWV3</accession>
<dbReference type="EC" id="2.3.1.180" evidence="1"/>
<dbReference type="EMBL" id="AJ938182">
    <property type="protein sequence ID" value="CAI80536.1"/>
    <property type="molecule type" value="Genomic_DNA"/>
</dbReference>
<dbReference type="RefSeq" id="WP_001100526.1">
    <property type="nucleotide sequence ID" value="NC_007622.1"/>
</dbReference>
<dbReference type="SMR" id="Q2YWV3"/>
<dbReference type="KEGG" id="sab:SAB0848"/>
<dbReference type="HOGENOM" id="CLU_039592_3_1_9"/>
<dbReference type="UniPathway" id="UPA00094"/>
<dbReference type="GO" id="GO:0005737">
    <property type="term" value="C:cytoplasm"/>
    <property type="evidence" value="ECO:0007669"/>
    <property type="project" value="UniProtKB-SubCell"/>
</dbReference>
<dbReference type="GO" id="GO:0004315">
    <property type="term" value="F:3-oxoacyl-[acyl-carrier-protein] synthase activity"/>
    <property type="evidence" value="ECO:0007669"/>
    <property type="project" value="InterPro"/>
</dbReference>
<dbReference type="GO" id="GO:0033818">
    <property type="term" value="F:beta-ketoacyl-acyl-carrier-protein synthase III activity"/>
    <property type="evidence" value="ECO:0007669"/>
    <property type="project" value="UniProtKB-UniRule"/>
</dbReference>
<dbReference type="GO" id="GO:0006633">
    <property type="term" value="P:fatty acid biosynthetic process"/>
    <property type="evidence" value="ECO:0007669"/>
    <property type="project" value="UniProtKB-UniRule"/>
</dbReference>
<dbReference type="CDD" id="cd00830">
    <property type="entry name" value="KAS_III"/>
    <property type="match status" value="1"/>
</dbReference>
<dbReference type="FunFam" id="3.40.47.10:FF:000004">
    <property type="entry name" value="3-oxoacyl-[acyl-carrier-protein] synthase 3"/>
    <property type="match status" value="1"/>
</dbReference>
<dbReference type="Gene3D" id="3.40.47.10">
    <property type="match status" value="2"/>
</dbReference>
<dbReference type="HAMAP" id="MF_01815">
    <property type="entry name" value="FabH"/>
    <property type="match status" value="1"/>
</dbReference>
<dbReference type="InterPro" id="IPR013747">
    <property type="entry name" value="ACP_syn_III_C"/>
</dbReference>
<dbReference type="InterPro" id="IPR013751">
    <property type="entry name" value="ACP_syn_III_N"/>
</dbReference>
<dbReference type="InterPro" id="IPR004655">
    <property type="entry name" value="FabH"/>
</dbReference>
<dbReference type="InterPro" id="IPR016039">
    <property type="entry name" value="Thiolase-like"/>
</dbReference>
<dbReference type="NCBIfam" id="TIGR00747">
    <property type="entry name" value="fabH"/>
    <property type="match status" value="1"/>
</dbReference>
<dbReference type="NCBIfam" id="NF006829">
    <property type="entry name" value="PRK09352.1"/>
    <property type="match status" value="1"/>
</dbReference>
<dbReference type="PANTHER" id="PTHR43091">
    <property type="entry name" value="3-OXOACYL-[ACYL-CARRIER-PROTEIN] SYNTHASE"/>
    <property type="match status" value="1"/>
</dbReference>
<dbReference type="PANTHER" id="PTHR43091:SF1">
    <property type="entry name" value="BETA-KETOACYL-[ACYL-CARRIER-PROTEIN] SYNTHASE III, CHLOROPLASTIC"/>
    <property type="match status" value="1"/>
</dbReference>
<dbReference type="Pfam" id="PF08545">
    <property type="entry name" value="ACP_syn_III"/>
    <property type="match status" value="1"/>
</dbReference>
<dbReference type="Pfam" id="PF08541">
    <property type="entry name" value="ACP_syn_III_C"/>
    <property type="match status" value="1"/>
</dbReference>
<dbReference type="SUPFAM" id="SSF53901">
    <property type="entry name" value="Thiolase-like"/>
    <property type="match status" value="1"/>
</dbReference>
<sequence length="313" mass="33879">MNVGIKGFGAYAPEKIIDNAYFEQFLDTSDEWISKMTGIKERHWADDDQDTSDLAYEASVKAIADAGIQPEDIDMIIVATATGDMPFPTVANMLQERLGTGKVASMDQLAACSGFMYSMITAKQYVQSGDYHNILVVGADKLSKITDLTDRSTAVLFGDGAGAVIIGEVSEGRGIISYEMGSDGTGGKHLYLDKDTGKLKMNGREVFKFAVRIMGDASTRVVEKANLTSDDIDLFIPHQANIRIMESARERLGISKDKMSVSVNKYGNTSAASIPLSIDQELKNGKLKDDDTIVLVGFGGGLTWGAMTIKWGK</sequence>
<keyword id="KW-0012">Acyltransferase</keyword>
<keyword id="KW-0963">Cytoplasm</keyword>
<keyword id="KW-0275">Fatty acid biosynthesis</keyword>
<keyword id="KW-0276">Fatty acid metabolism</keyword>
<keyword id="KW-0444">Lipid biosynthesis</keyword>
<keyword id="KW-0443">Lipid metabolism</keyword>
<keyword id="KW-0511">Multifunctional enzyme</keyword>
<keyword id="KW-0808">Transferase</keyword>
<name>FABH_STAAB</name>
<evidence type="ECO:0000255" key="1">
    <source>
        <dbReference type="HAMAP-Rule" id="MF_01815"/>
    </source>
</evidence>
<gene>
    <name evidence="1" type="primary">fabH</name>
    <name type="ordered locus">SAB0848</name>
</gene>
<organism>
    <name type="scientific">Staphylococcus aureus (strain bovine RF122 / ET3-1)</name>
    <dbReference type="NCBI Taxonomy" id="273036"/>
    <lineage>
        <taxon>Bacteria</taxon>
        <taxon>Bacillati</taxon>
        <taxon>Bacillota</taxon>
        <taxon>Bacilli</taxon>
        <taxon>Bacillales</taxon>
        <taxon>Staphylococcaceae</taxon>
        <taxon>Staphylococcus</taxon>
    </lineage>
</organism>
<comment type="function">
    <text evidence="1">Catalyzes the condensation reaction of fatty acid synthesis by the addition to an acyl acceptor of two carbons from malonyl-ACP. Catalyzes the first condensation reaction which initiates fatty acid synthesis and may therefore play a role in governing the total rate of fatty acid production. Possesses both acetoacetyl-ACP synthase and acetyl transacylase activities. Its substrate specificity determines the biosynthesis of branched-chain and/or straight-chain of fatty acids.</text>
</comment>
<comment type="catalytic activity">
    <reaction evidence="1">
        <text>malonyl-[ACP] + acetyl-CoA + H(+) = 3-oxobutanoyl-[ACP] + CO2 + CoA</text>
        <dbReference type="Rhea" id="RHEA:12080"/>
        <dbReference type="Rhea" id="RHEA-COMP:9623"/>
        <dbReference type="Rhea" id="RHEA-COMP:9625"/>
        <dbReference type="ChEBI" id="CHEBI:15378"/>
        <dbReference type="ChEBI" id="CHEBI:16526"/>
        <dbReference type="ChEBI" id="CHEBI:57287"/>
        <dbReference type="ChEBI" id="CHEBI:57288"/>
        <dbReference type="ChEBI" id="CHEBI:78449"/>
        <dbReference type="ChEBI" id="CHEBI:78450"/>
        <dbReference type="EC" id="2.3.1.180"/>
    </reaction>
</comment>
<comment type="pathway">
    <text evidence="1">Lipid metabolism; fatty acid biosynthesis.</text>
</comment>
<comment type="subunit">
    <text evidence="1">Homodimer.</text>
</comment>
<comment type="subcellular location">
    <subcellularLocation>
        <location evidence="1">Cytoplasm</location>
    </subcellularLocation>
</comment>
<comment type="domain">
    <text evidence="1">The last Arg residue of the ACP-binding site is essential for the weak association between ACP/AcpP and FabH.</text>
</comment>
<comment type="similarity">
    <text evidence="1">Belongs to the thiolase-like superfamily. FabH family.</text>
</comment>
<feature type="chain" id="PRO_1000056417" description="Beta-ketoacyl-[acyl-carrier-protein] synthase III">
    <location>
        <begin position="1"/>
        <end position="313"/>
    </location>
</feature>
<feature type="region of interest" description="ACP-binding" evidence="1">
    <location>
        <begin position="239"/>
        <end position="243"/>
    </location>
</feature>
<feature type="active site" evidence="1">
    <location>
        <position position="112"/>
    </location>
</feature>
<feature type="active site" evidence="1">
    <location>
        <position position="238"/>
    </location>
</feature>
<feature type="active site" evidence="1">
    <location>
        <position position="268"/>
    </location>
</feature>
<proteinExistence type="inferred from homology"/>